<reference key="1">
    <citation type="journal article" date="2006" name="Proc. Natl. Acad. Sci. U.S.A.">
        <title>The complete genome sequence of a chronic atrophic gastritis Helicobacter pylori strain: evolution during disease progression.</title>
        <authorList>
            <person name="Oh J.D."/>
            <person name="Kling-Baeckhed H."/>
            <person name="Giannakis M."/>
            <person name="Xu J."/>
            <person name="Fulton R.S."/>
            <person name="Fulton L.A."/>
            <person name="Cordum H.S."/>
            <person name="Wang C."/>
            <person name="Elliott G."/>
            <person name="Edwards J."/>
            <person name="Mardis E.R."/>
            <person name="Engstrand L.G."/>
            <person name="Gordon J.I."/>
        </authorList>
    </citation>
    <scope>NUCLEOTIDE SEQUENCE [LARGE SCALE GENOMIC DNA]</scope>
    <source>
        <strain>HPAG1</strain>
    </source>
</reference>
<keyword id="KW-0143">Chaperone</keyword>
<keyword id="KW-0963">Cytoplasm</keyword>
<keyword id="KW-0346">Stress response</keyword>
<organism>
    <name type="scientific">Helicobacter pylori (strain HPAG1)</name>
    <dbReference type="NCBI Taxonomy" id="357544"/>
    <lineage>
        <taxon>Bacteria</taxon>
        <taxon>Pseudomonadati</taxon>
        <taxon>Campylobacterota</taxon>
        <taxon>Epsilonproteobacteria</taxon>
        <taxon>Campylobacterales</taxon>
        <taxon>Helicobacteraceae</taxon>
        <taxon>Helicobacter</taxon>
    </lineage>
</organism>
<protein>
    <recommendedName>
        <fullName evidence="1">Protein GrpE</fullName>
    </recommendedName>
    <alternativeName>
        <fullName evidence="1">HSP-70 cofactor</fullName>
    </alternativeName>
</protein>
<dbReference type="EMBL" id="CP000241">
    <property type="protein sequence ID" value="ABF84177.1"/>
    <property type="molecule type" value="Genomic_DNA"/>
</dbReference>
<dbReference type="RefSeq" id="WP_000650862.1">
    <property type="nucleotide sequence ID" value="NC_008086.1"/>
</dbReference>
<dbReference type="SMR" id="Q1CV45"/>
<dbReference type="KEGG" id="hpa:HPAG1_0110"/>
<dbReference type="HOGENOM" id="CLU_057217_6_3_7"/>
<dbReference type="GO" id="GO:0005829">
    <property type="term" value="C:cytosol"/>
    <property type="evidence" value="ECO:0007669"/>
    <property type="project" value="TreeGrafter"/>
</dbReference>
<dbReference type="GO" id="GO:0000774">
    <property type="term" value="F:adenyl-nucleotide exchange factor activity"/>
    <property type="evidence" value="ECO:0007669"/>
    <property type="project" value="InterPro"/>
</dbReference>
<dbReference type="GO" id="GO:0042803">
    <property type="term" value="F:protein homodimerization activity"/>
    <property type="evidence" value="ECO:0007669"/>
    <property type="project" value="InterPro"/>
</dbReference>
<dbReference type="GO" id="GO:0051087">
    <property type="term" value="F:protein-folding chaperone binding"/>
    <property type="evidence" value="ECO:0007669"/>
    <property type="project" value="InterPro"/>
</dbReference>
<dbReference type="GO" id="GO:0051082">
    <property type="term" value="F:unfolded protein binding"/>
    <property type="evidence" value="ECO:0007669"/>
    <property type="project" value="TreeGrafter"/>
</dbReference>
<dbReference type="GO" id="GO:0006457">
    <property type="term" value="P:protein folding"/>
    <property type="evidence" value="ECO:0007669"/>
    <property type="project" value="InterPro"/>
</dbReference>
<dbReference type="CDD" id="cd00446">
    <property type="entry name" value="GrpE"/>
    <property type="match status" value="1"/>
</dbReference>
<dbReference type="FunFam" id="2.30.22.10:FF:000001">
    <property type="entry name" value="Protein GrpE"/>
    <property type="match status" value="1"/>
</dbReference>
<dbReference type="FunFam" id="3.90.20.20:FF:000023">
    <property type="entry name" value="Protein GrpE"/>
    <property type="match status" value="1"/>
</dbReference>
<dbReference type="Gene3D" id="3.90.20.20">
    <property type="match status" value="1"/>
</dbReference>
<dbReference type="Gene3D" id="2.30.22.10">
    <property type="entry name" value="Head domain of nucleotide exchange factor GrpE"/>
    <property type="match status" value="1"/>
</dbReference>
<dbReference type="HAMAP" id="MF_01151">
    <property type="entry name" value="GrpE"/>
    <property type="match status" value="1"/>
</dbReference>
<dbReference type="InterPro" id="IPR000740">
    <property type="entry name" value="GrpE"/>
</dbReference>
<dbReference type="InterPro" id="IPR013805">
    <property type="entry name" value="GrpE_coiled_coil"/>
</dbReference>
<dbReference type="InterPro" id="IPR009012">
    <property type="entry name" value="GrpE_head"/>
</dbReference>
<dbReference type="NCBIfam" id="NF010738">
    <property type="entry name" value="PRK14140.1"/>
    <property type="match status" value="1"/>
</dbReference>
<dbReference type="NCBIfam" id="NF010747">
    <property type="entry name" value="PRK14149.1"/>
    <property type="match status" value="1"/>
</dbReference>
<dbReference type="PANTHER" id="PTHR21237">
    <property type="entry name" value="GRPE PROTEIN"/>
    <property type="match status" value="1"/>
</dbReference>
<dbReference type="PANTHER" id="PTHR21237:SF23">
    <property type="entry name" value="GRPE PROTEIN HOMOLOG, MITOCHONDRIAL"/>
    <property type="match status" value="1"/>
</dbReference>
<dbReference type="Pfam" id="PF01025">
    <property type="entry name" value="GrpE"/>
    <property type="match status" value="1"/>
</dbReference>
<dbReference type="PRINTS" id="PR00773">
    <property type="entry name" value="GRPEPROTEIN"/>
</dbReference>
<dbReference type="SUPFAM" id="SSF58014">
    <property type="entry name" value="Coiled-coil domain of nucleotide exchange factor GrpE"/>
    <property type="match status" value="1"/>
</dbReference>
<dbReference type="SUPFAM" id="SSF51064">
    <property type="entry name" value="Head domain of nucleotide exchange factor GrpE"/>
    <property type="match status" value="1"/>
</dbReference>
<dbReference type="PROSITE" id="PS01071">
    <property type="entry name" value="GRPE"/>
    <property type="match status" value="1"/>
</dbReference>
<evidence type="ECO:0000255" key="1">
    <source>
        <dbReference type="HAMAP-Rule" id="MF_01151"/>
    </source>
</evidence>
<evidence type="ECO:0000256" key="2">
    <source>
        <dbReference type="SAM" id="MobiDB-lite"/>
    </source>
</evidence>
<proteinExistence type="inferred from homology"/>
<sequence length="191" mass="22185">MKDEHNQEHDHLSQKEPESYQKACACKEQQGEEKQEASEKECEIKEDFELKYKEMHEKYLRVHADFENVKKRLERDKSMALEYAYEKIALDLLPVIDALLGAYKSAAEENKESALTKGLELTMEKLHEVLARHGIEGIECLEEFDPNFHNAIMQVKSEEKENGKIVQVLQQGYKYKGRVLRPAMVSIAKND</sequence>
<comment type="function">
    <text evidence="1">Participates actively in the response to hyperosmotic and heat shock by preventing the aggregation of stress-denatured proteins, in association with DnaK and GrpE. It is the nucleotide exchange factor for DnaK and may function as a thermosensor. Unfolded proteins bind initially to DnaJ; upon interaction with the DnaJ-bound protein, DnaK hydrolyzes its bound ATP, resulting in the formation of a stable complex. GrpE releases ADP from DnaK; ATP binding to DnaK triggers the release of the substrate protein, thus completing the reaction cycle. Several rounds of ATP-dependent interactions between DnaJ, DnaK and GrpE are required for fully efficient folding.</text>
</comment>
<comment type="subunit">
    <text evidence="1">Homodimer.</text>
</comment>
<comment type="subcellular location">
    <subcellularLocation>
        <location evidence="1">Cytoplasm</location>
    </subcellularLocation>
</comment>
<comment type="similarity">
    <text evidence="1">Belongs to the GrpE family.</text>
</comment>
<feature type="chain" id="PRO_1000053590" description="Protein GrpE">
    <location>
        <begin position="1"/>
        <end position="191"/>
    </location>
</feature>
<feature type="region of interest" description="Disordered" evidence="2">
    <location>
        <begin position="1"/>
        <end position="42"/>
    </location>
</feature>
<feature type="compositionally biased region" description="Basic and acidic residues" evidence="2">
    <location>
        <begin position="1"/>
        <end position="19"/>
    </location>
</feature>
<feature type="compositionally biased region" description="Basic and acidic residues" evidence="2">
    <location>
        <begin position="29"/>
        <end position="42"/>
    </location>
</feature>
<accession>Q1CV45</accession>
<gene>
    <name evidence="1" type="primary">grpE</name>
    <name type="ordered locus">HPAG1_0110</name>
</gene>
<name>GRPE_HELPH</name>